<evidence type="ECO:0000255" key="1">
    <source>
        <dbReference type="HAMAP-Rule" id="MF_00386"/>
    </source>
</evidence>
<evidence type="ECO:0000256" key="2">
    <source>
        <dbReference type="SAM" id="MobiDB-lite"/>
    </source>
</evidence>
<sequence length="105" mass="11500">MTRDRPTLLARVLILPIRGYQRWISPLFPPVCRFYPSCSSYAVEALRVHGAGRGLWLTIRRLGKCHPFHPGGLDPVPPRRNESGTEISDARPGSDGEASPGAPGL</sequence>
<accession>Q47K74</accession>
<dbReference type="EMBL" id="CP000088">
    <property type="protein sequence ID" value="AAZ57148.1"/>
    <property type="molecule type" value="Genomic_DNA"/>
</dbReference>
<dbReference type="STRING" id="269800.Tfu_3115"/>
<dbReference type="KEGG" id="tfu:Tfu_3115"/>
<dbReference type="eggNOG" id="COG0759">
    <property type="taxonomic scope" value="Bacteria"/>
</dbReference>
<dbReference type="HOGENOM" id="CLU_144811_2_0_11"/>
<dbReference type="OrthoDB" id="9801753at2"/>
<dbReference type="GO" id="GO:0005886">
    <property type="term" value="C:plasma membrane"/>
    <property type="evidence" value="ECO:0007669"/>
    <property type="project" value="UniProtKB-SubCell"/>
</dbReference>
<dbReference type="HAMAP" id="MF_00386">
    <property type="entry name" value="UPF0161_YidD"/>
    <property type="match status" value="1"/>
</dbReference>
<dbReference type="InterPro" id="IPR002696">
    <property type="entry name" value="Membr_insert_effic_factor_YidD"/>
</dbReference>
<dbReference type="NCBIfam" id="TIGR00278">
    <property type="entry name" value="membrane protein insertion efficiency factor YidD"/>
    <property type="match status" value="1"/>
</dbReference>
<dbReference type="PANTHER" id="PTHR33383">
    <property type="entry name" value="MEMBRANE PROTEIN INSERTION EFFICIENCY FACTOR-RELATED"/>
    <property type="match status" value="1"/>
</dbReference>
<dbReference type="PANTHER" id="PTHR33383:SF1">
    <property type="entry name" value="MEMBRANE PROTEIN INSERTION EFFICIENCY FACTOR-RELATED"/>
    <property type="match status" value="1"/>
</dbReference>
<dbReference type="Pfam" id="PF01809">
    <property type="entry name" value="YidD"/>
    <property type="match status" value="1"/>
</dbReference>
<dbReference type="SMART" id="SM01234">
    <property type="entry name" value="Haemolytic"/>
    <property type="match status" value="1"/>
</dbReference>
<proteinExistence type="inferred from homology"/>
<keyword id="KW-1003">Cell membrane</keyword>
<keyword id="KW-0472">Membrane</keyword>
<reference key="1">
    <citation type="journal article" date="2007" name="J. Bacteriol.">
        <title>Genome sequence and analysis of the soil cellulolytic actinomycete Thermobifida fusca YX.</title>
        <authorList>
            <person name="Lykidis A."/>
            <person name="Mavromatis K."/>
            <person name="Ivanova N."/>
            <person name="Anderson I."/>
            <person name="Land M."/>
            <person name="DiBartolo G."/>
            <person name="Martinez M."/>
            <person name="Lapidus A."/>
            <person name="Lucas S."/>
            <person name="Copeland A."/>
            <person name="Richardson P."/>
            <person name="Wilson D.B."/>
            <person name="Kyrpides N."/>
        </authorList>
    </citation>
    <scope>NUCLEOTIDE SEQUENCE [LARGE SCALE GENOMIC DNA]</scope>
    <source>
        <strain>YX</strain>
    </source>
</reference>
<feature type="chain" id="PRO_0000253192" description="Putative membrane protein insertion efficiency factor">
    <location>
        <begin position="1"/>
        <end position="105"/>
    </location>
</feature>
<feature type="region of interest" description="Disordered" evidence="2">
    <location>
        <begin position="68"/>
        <end position="105"/>
    </location>
</feature>
<feature type="compositionally biased region" description="Basic and acidic residues" evidence="2">
    <location>
        <begin position="77"/>
        <end position="94"/>
    </location>
</feature>
<name>YIDD_THEFY</name>
<comment type="function">
    <text evidence="1">Could be involved in insertion of integral membrane proteins into the membrane.</text>
</comment>
<comment type="subcellular location">
    <subcellularLocation>
        <location evidence="1">Cell membrane</location>
        <topology evidence="1">Peripheral membrane protein</topology>
        <orientation evidence="1">Cytoplasmic side</orientation>
    </subcellularLocation>
</comment>
<comment type="similarity">
    <text evidence="1">Belongs to the UPF0161 family.</text>
</comment>
<protein>
    <recommendedName>
        <fullName evidence="1">Putative membrane protein insertion efficiency factor</fullName>
    </recommendedName>
</protein>
<gene>
    <name type="ordered locus">Tfu_3115</name>
</gene>
<organism>
    <name type="scientific">Thermobifida fusca (strain YX)</name>
    <dbReference type="NCBI Taxonomy" id="269800"/>
    <lineage>
        <taxon>Bacteria</taxon>
        <taxon>Bacillati</taxon>
        <taxon>Actinomycetota</taxon>
        <taxon>Actinomycetes</taxon>
        <taxon>Streptosporangiales</taxon>
        <taxon>Nocardiopsidaceae</taxon>
        <taxon>Thermobifida</taxon>
    </lineage>
</organism>